<protein>
    <recommendedName>
        <fullName>Nuclear export protein</fullName>
        <shortName>NEP</shortName>
    </recommendedName>
    <alternativeName>
        <fullName>Non-structural protein 2</fullName>
        <shortName>NS2</shortName>
    </alternativeName>
</protein>
<evidence type="ECO:0000250" key="1"/>
<evidence type="ECO:0000305" key="2"/>
<dbReference type="EMBL" id="D00030">
    <property type="protein sequence ID" value="BAA24037.1"/>
    <property type="status" value="ALT_FRAME"/>
    <property type="molecule type" value="Genomic_RNA"/>
</dbReference>
<dbReference type="SMR" id="P0C135"/>
<dbReference type="GO" id="GO:0042025">
    <property type="term" value="C:host cell nucleus"/>
    <property type="evidence" value="ECO:0007669"/>
    <property type="project" value="UniProtKB-SubCell"/>
</dbReference>
<dbReference type="GO" id="GO:0044423">
    <property type="term" value="C:virion component"/>
    <property type="evidence" value="ECO:0007669"/>
    <property type="project" value="UniProtKB-KW"/>
</dbReference>
<dbReference type="InterPro" id="IPR005188">
    <property type="entry name" value="Flu_C_NS2"/>
</dbReference>
<dbReference type="Pfam" id="PF03555">
    <property type="entry name" value="Flu_C_NS2"/>
    <property type="match status" value="1"/>
</dbReference>
<sequence length="177" mass="20250">VKSTNLMAFVATKMLERQEDLDTCTEMQVEKMKTSTKARLRTESSFAPRTWEDAIKDEILRRSVDTSSLDKWPELKQELENVSDALKADSLWLPMKSLSLYSKVSNQELSSIPIGEMKHQILTRLKLICSRLEKLDLNLSKAVLGIQNSEDLILIIYNRDVCKNTILMIKSLCNSLI</sequence>
<comment type="function">
    <text evidence="1">Mediates the nuclear export of encapsidated genomic RNAs (ribonucleoproteins, RNPs). Acts as an adapter between viral RNPs complexes and the nuclear export machinery of the cell. Possesses no intrinsic RNA-binding activity, but includes a C-terminal M1-binding domain. This domain is believed to allow recognition of RNPs to which the M1 protein is bound. Because the M1 protein is not available in large quantities until the later stages of infection, such an indirect recognition mechanism probably ensures that genomic RNPs are not exported from the nucleus before sufficient quantities of viral mRNA and progeny genomic RNA have been synthesized. Furthermore, the RNPs enters the cytoplasm only when they have associated with the M1 protein that is necessary to guide them to the plasma membrane. May down-regulate viral RNA synthesis when overproduced (By similarity).</text>
</comment>
<comment type="subunit">
    <text evidence="1">Binds M1 protein. May interact with human nucleoporins and exportin XPO1/CRM1 (By similarity).</text>
</comment>
<comment type="subcellular location">
    <subcellularLocation>
        <location evidence="2">Virion</location>
    </subcellularLocation>
    <subcellularLocation>
        <location evidence="1">Host nucleus</location>
    </subcellularLocation>
</comment>
<comment type="alternative products">
    <event type="alternative splicing"/>
    <isoform>
        <id>P0C135-1</id>
        <name>NEP</name>
        <name>NS2</name>
        <sequence type="displayed"/>
    </isoform>
    <isoform>
        <id>P0C134-1</id>
        <name>NS1</name>
        <sequence type="external"/>
    </isoform>
</comment>
<comment type="sequence caution" evidence="2">
    <conflict type="frameshift">
        <sequence resource="EMBL-CDS" id="BAA24037"/>
    </conflict>
</comment>
<name>NEP_INCGL</name>
<reference key="1">
    <citation type="journal article" date="1986" name="Virology">
        <title>Epidemiology of influenza C virus in man: multiple evolutionary lineages and low rate of change.</title>
        <authorList>
            <person name="Buonagurio D.A."/>
            <person name="Nakada S."/>
            <person name="Fitch W.M."/>
            <person name="Palese P."/>
        </authorList>
    </citation>
    <scope>NUCLEOTIDE SEQUENCE [GENOMIC RNA]</scope>
</reference>
<reference key="2">
    <citation type="journal article" date="2000" name="J. Gen. Virol.">
        <title>Phylogenetic analysis of influenza C virus nonstructural (NS) protein genes and identification of the NS2 protein.</title>
        <authorList>
            <person name="Alamgir A.S.M."/>
            <person name="Matsuzaki Y."/>
            <person name="Hongo S."/>
            <person name="Tsuchiya E."/>
            <person name="Sugawara K."/>
            <person name="Muraki Y."/>
            <person name="Nakamura K."/>
        </authorList>
    </citation>
    <scope>IDENTIFICATION OF FRAMESHIFT</scope>
</reference>
<accession>P0C135</accession>
<accession>P06822</accession>
<feature type="chain" id="PRO_0000223677" description="Nuclear export protein">
    <location>
        <begin position="1"/>
        <end position="177"/>
    </location>
</feature>
<feature type="short sequence motif" description="Nuclear export signal" evidence="1">
    <location>
        <begin position="91"/>
        <end position="100"/>
    </location>
</feature>
<feature type="short sequence motif" description="Nuclear export signal" evidence="1">
    <location>
        <begin position="117"/>
        <end position="127"/>
    </location>
</feature>
<feature type="non-terminal residue">
    <location>
        <position position="1"/>
    </location>
</feature>
<organism>
    <name type="scientific">Influenza C virus (strain C/Great lakes/1167/1954)</name>
    <dbReference type="NCBI Taxonomy" id="11557"/>
    <lineage>
        <taxon>Viruses</taxon>
        <taxon>Riboviria</taxon>
        <taxon>Orthornavirae</taxon>
        <taxon>Negarnaviricota</taxon>
        <taxon>Polyploviricotina</taxon>
        <taxon>Insthoviricetes</taxon>
        <taxon>Articulavirales</taxon>
        <taxon>Orthomyxoviridae</taxon>
        <taxon>Gammainfluenzavirus</taxon>
        <taxon>Gammainfluenzavirus influenzae</taxon>
        <taxon>Influenza C virus</taxon>
    </lineage>
</organism>
<gene>
    <name type="primary">NS</name>
</gene>
<organismHost>
    <name type="scientific">Homo sapiens</name>
    <name type="common">Human</name>
    <dbReference type="NCBI Taxonomy" id="9606"/>
</organismHost>
<organismHost>
    <name type="scientific">Sus scrofa</name>
    <name type="common">Pig</name>
    <dbReference type="NCBI Taxonomy" id="9823"/>
</organismHost>
<proteinExistence type="inferred from homology"/>
<keyword id="KW-0025">Alternative splicing</keyword>
<keyword id="KW-1048">Host nucleus</keyword>
<keyword id="KW-0945">Host-virus interaction</keyword>
<keyword id="KW-0813">Transport</keyword>
<keyword id="KW-0946">Virion</keyword>